<protein>
    <recommendedName>
        <fullName>Zinc finger protein 132</fullName>
    </recommendedName>
</protein>
<gene>
    <name type="primary">ZNF132</name>
</gene>
<name>ZN132_HUMAN</name>
<organism>
    <name type="scientific">Homo sapiens</name>
    <name type="common">Human</name>
    <dbReference type="NCBI Taxonomy" id="9606"/>
    <lineage>
        <taxon>Eukaryota</taxon>
        <taxon>Metazoa</taxon>
        <taxon>Chordata</taxon>
        <taxon>Craniata</taxon>
        <taxon>Vertebrata</taxon>
        <taxon>Euteleostomi</taxon>
        <taxon>Mammalia</taxon>
        <taxon>Eutheria</taxon>
        <taxon>Euarchontoglires</taxon>
        <taxon>Primates</taxon>
        <taxon>Haplorrhini</taxon>
        <taxon>Catarrhini</taxon>
        <taxon>Hominidae</taxon>
        <taxon>Homo</taxon>
    </lineage>
</organism>
<sequence length="706" mass="80623">MALPSPQVLMGLPALLMGPAQHTSWPCGSAVPTLKSMVTFEDVAVYFSQEEWELLDAAQRHLYHSVMLENLELVTSLGSWHGVEGEGAHPKQNVSVEVLQVRIPNADPSTKKANSCDMCGPFLKDILHLAEHQGTQSEEKPYTCGACGRDFWLNANLHQHQKEHSGGKPFRWYKDRDALMKSSKVHLSENPFTCREGGKVILGSCDLLQLQAVDSGQKPYSNLGQLPEVCTTQKLFECSNCGKAFLKSSTLPNHLRTHSEEIPFTCPTGGNFLEEKSILGNKKFHTGEIPHVCKECGKAFSHSSKLRKHQKFHTEVKYYECIACGKTFNHKLTFVHHQRIHSGERPYECDECGKAFSNRSHLIRHEKVHTGERPFECLKCGRAFSQSSNFLRHQKVHTQVRPYECSQCGKSFSRSSALIQHWRVHTGERPYECSECGRAFNNNSNLAQHQKVHTGERPFECSECGRDFSQSSHLLRHQKVHTGERPFECCDCGKAFSNSSTLIQHQKVHTGQRPYECSECRKSFSRSSSLIQHWRIHTGEKPYECSECGKAFAHSSTLIEHWRVHTKERPYECNECGKFFSQNSILIKHQKVHTGEKPYKCSECGKFFSRKSSLICHWRVHTGERPYECSECGRAFSSNSHLVRHQRVHTQERPYECIQCGKAFSERSTLVRHQKVHTRERTYECSQCGKLFSHLCNLAQHKKIHT</sequence>
<reference key="1">
    <citation type="journal article" date="1995" name="Genomics">
        <title>Isolation and fine mapping of 16 novel human zinc finger-encoding cDNAs identify putative candidate genes for developmental and malignant disorders.</title>
        <authorList>
            <person name="Tommerup N."/>
            <person name="Vissing H."/>
        </authorList>
    </citation>
    <scope>NUCLEOTIDE SEQUENCE [MRNA] (ISOFORM 2)</scope>
    <source>
        <tissue>Insulinoma</tissue>
    </source>
</reference>
<reference key="2">
    <citation type="journal article" date="2004" name="Nature">
        <title>The DNA sequence and biology of human chromosome 19.</title>
        <authorList>
            <person name="Grimwood J."/>
            <person name="Gordon L.A."/>
            <person name="Olsen A.S."/>
            <person name="Terry A."/>
            <person name="Schmutz J."/>
            <person name="Lamerdin J.E."/>
            <person name="Hellsten U."/>
            <person name="Goodstein D."/>
            <person name="Couronne O."/>
            <person name="Tran-Gyamfi M."/>
            <person name="Aerts A."/>
            <person name="Altherr M."/>
            <person name="Ashworth L."/>
            <person name="Bajorek E."/>
            <person name="Black S."/>
            <person name="Branscomb E."/>
            <person name="Caenepeel S."/>
            <person name="Carrano A.V."/>
            <person name="Caoile C."/>
            <person name="Chan Y.M."/>
            <person name="Christensen M."/>
            <person name="Cleland C.A."/>
            <person name="Copeland A."/>
            <person name="Dalin E."/>
            <person name="Dehal P."/>
            <person name="Denys M."/>
            <person name="Detter J.C."/>
            <person name="Escobar J."/>
            <person name="Flowers D."/>
            <person name="Fotopulos D."/>
            <person name="Garcia C."/>
            <person name="Georgescu A.M."/>
            <person name="Glavina T."/>
            <person name="Gomez M."/>
            <person name="Gonzales E."/>
            <person name="Groza M."/>
            <person name="Hammon N."/>
            <person name="Hawkins T."/>
            <person name="Haydu L."/>
            <person name="Ho I."/>
            <person name="Huang W."/>
            <person name="Israni S."/>
            <person name="Jett J."/>
            <person name="Kadner K."/>
            <person name="Kimball H."/>
            <person name="Kobayashi A."/>
            <person name="Larionov V."/>
            <person name="Leem S.-H."/>
            <person name="Lopez F."/>
            <person name="Lou Y."/>
            <person name="Lowry S."/>
            <person name="Malfatti S."/>
            <person name="Martinez D."/>
            <person name="McCready P.M."/>
            <person name="Medina C."/>
            <person name="Morgan J."/>
            <person name="Nelson K."/>
            <person name="Nolan M."/>
            <person name="Ovcharenko I."/>
            <person name="Pitluck S."/>
            <person name="Pollard M."/>
            <person name="Popkie A.P."/>
            <person name="Predki P."/>
            <person name="Quan G."/>
            <person name="Ramirez L."/>
            <person name="Rash S."/>
            <person name="Retterer J."/>
            <person name="Rodriguez A."/>
            <person name="Rogers S."/>
            <person name="Salamov A."/>
            <person name="Salazar A."/>
            <person name="She X."/>
            <person name="Smith D."/>
            <person name="Slezak T."/>
            <person name="Solovyev V."/>
            <person name="Thayer N."/>
            <person name="Tice H."/>
            <person name="Tsai M."/>
            <person name="Ustaszewska A."/>
            <person name="Vo N."/>
            <person name="Wagner M."/>
            <person name="Wheeler J."/>
            <person name="Wu K."/>
            <person name="Xie G."/>
            <person name="Yang J."/>
            <person name="Dubchak I."/>
            <person name="Furey T.S."/>
            <person name="DeJong P."/>
            <person name="Dickson M."/>
            <person name="Gordon D."/>
            <person name="Eichler E.E."/>
            <person name="Pennacchio L.A."/>
            <person name="Richardson P."/>
            <person name="Stubbs L."/>
            <person name="Rokhsar D.S."/>
            <person name="Myers R.M."/>
            <person name="Rubin E.M."/>
            <person name="Lucas S.M."/>
        </authorList>
    </citation>
    <scope>NUCLEOTIDE SEQUENCE [LARGE SCALE GENOMIC DNA]</scope>
</reference>
<reference key="3">
    <citation type="submission" date="2005-07" db="EMBL/GenBank/DDBJ databases">
        <authorList>
            <person name="Mural R.J."/>
            <person name="Istrail S."/>
            <person name="Sutton G.G."/>
            <person name="Florea L."/>
            <person name="Halpern A.L."/>
            <person name="Mobarry C.M."/>
            <person name="Lippert R."/>
            <person name="Walenz B."/>
            <person name="Shatkay H."/>
            <person name="Dew I."/>
            <person name="Miller J.R."/>
            <person name="Flanigan M.J."/>
            <person name="Edwards N.J."/>
            <person name="Bolanos R."/>
            <person name="Fasulo D."/>
            <person name="Halldorsson B.V."/>
            <person name="Hannenhalli S."/>
            <person name="Turner R."/>
            <person name="Yooseph S."/>
            <person name="Lu F."/>
            <person name="Nusskern D.R."/>
            <person name="Shue B.C."/>
            <person name="Zheng X.H."/>
            <person name="Zhong F."/>
            <person name="Delcher A.L."/>
            <person name="Huson D.H."/>
            <person name="Kravitz S.A."/>
            <person name="Mouchard L."/>
            <person name="Reinert K."/>
            <person name="Remington K.A."/>
            <person name="Clark A.G."/>
            <person name="Waterman M.S."/>
            <person name="Eichler E.E."/>
            <person name="Adams M.D."/>
            <person name="Hunkapiller M.W."/>
            <person name="Myers E.W."/>
            <person name="Venter J.C."/>
        </authorList>
    </citation>
    <scope>NUCLEOTIDE SEQUENCE [LARGE SCALE GENOMIC DNA]</scope>
</reference>
<reference key="4">
    <citation type="journal article" date="2004" name="Genome Res.">
        <title>The status, quality, and expansion of the NIH full-length cDNA project: the Mammalian Gene Collection (MGC).</title>
        <authorList>
            <consortium name="The MGC Project Team"/>
        </authorList>
    </citation>
    <scope>NUCLEOTIDE SEQUENCE [LARGE SCALE MRNA] (ISOFORM 1)</scope>
</reference>
<dbReference type="EMBL" id="U09411">
    <property type="protein sequence ID" value="AAC50252.1"/>
    <property type="molecule type" value="mRNA"/>
</dbReference>
<dbReference type="EMBL" id="AC012313">
    <property type="status" value="NOT_ANNOTATED_CDS"/>
    <property type="molecule type" value="Genomic_DNA"/>
</dbReference>
<dbReference type="EMBL" id="CH471135">
    <property type="protein sequence ID" value="EAW72591.1"/>
    <property type="molecule type" value="Genomic_DNA"/>
</dbReference>
<dbReference type="EMBL" id="BC109107">
    <property type="protein sequence ID" value="AAI09108.1"/>
    <property type="molecule type" value="mRNA"/>
</dbReference>
<dbReference type="EMBL" id="BC109108">
    <property type="protein sequence ID" value="AAI09109.1"/>
    <property type="molecule type" value="mRNA"/>
</dbReference>
<dbReference type="CCDS" id="CCDS12980.1">
    <molecule id="P52740-1"/>
</dbReference>
<dbReference type="PIR" id="I38598">
    <property type="entry name" value="I38598"/>
</dbReference>
<dbReference type="RefSeq" id="NP_003424.3">
    <molecule id="P52740-1"/>
    <property type="nucleotide sequence ID" value="NM_003433.3"/>
</dbReference>
<dbReference type="SMR" id="P52740"/>
<dbReference type="FunCoup" id="P52740">
    <property type="interactions" value="1"/>
</dbReference>
<dbReference type="IntAct" id="P52740">
    <property type="interactions" value="3"/>
</dbReference>
<dbReference type="STRING" id="9606.ENSP00000254166"/>
<dbReference type="iPTMnet" id="P52740"/>
<dbReference type="PhosphoSitePlus" id="P52740"/>
<dbReference type="BioMuta" id="ZNF132"/>
<dbReference type="DMDM" id="212276481"/>
<dbReference type="jPOST" id="P52740"/>
<dbReference type="MassIVE" id="P52740"/>
<dbReference type="PaxDb" id="9606-ENSP00000254166"/>
<dbReference type="PeptideAtlas" id="P52740"/>
<dbReference type="ProteomicsDB" id="56514">
    <molecule id="P52740-1"/>
</dbReference>
<dbReference type="ProteomicsDB" id="56515">
    <molecule id="P52740-2"/>
</dbReference>
<dbReference type="Antibodypedia" id="1787">
    <property type="antibodies" value="80 antibodies from 16 providers"/>
</dbReference>
<dbReference type="DNASU" id="7691"/>
<dbReference type="Ensembl" id="ENST00000254166.4">
    <molecule id="P52740-1"/>
    <property type="protein sequence ID" value="ENSP00000254166.2"/>
    <property type="gene ID" value="ENSG00000131849.14"/>
</dbReference>
<dbReference type="GeneID" id="7691"/>
<dbReference type="KEGG" id="hsa:7691"/>
<dbReference type="MANE-Select" id="ENST00000254166.4">
    <property type="protein sequence ID" value="ENSP00000254166.2"/>
    <property type="RefSeq nucleotide sequence ID" value="NM_003433.4"/>
    <property type="RefSeq protein sequence ID" value="NP_003424.3"/>
</dbReference>
<dbReference type="UCSC" id="uc002qst.4">
    <molecule id="P52740-1"/>
    <property type="organism name" value="human"/>
</dbReference>
<dbReference type="AGR" id="HGNC:12916"/>
<dbReference type="CTD" id="7691"/>
<dbReference type="DisGeNET" id="7691"/>
<dbReference type="GeneCards" id="ZNF132"/>
<dbReference type="HGNC" id="HGNC:12916">
    <property type="gene designation" value="ZNF132"/>
</dbReference>
<dbReference type="HPA" id="ENSG00000131849">
    <property type="expression patterns" value="Low tissue specificity"/>
</dbReference>
<dbReference type="MIM" id="604074">
    <property type="type" value="gene"/>
</dbReference>
<dbReference type="neXtProt" id="NX_P52740"/>
<dbReference type="OpenTargets" id="ENSG00000131849"/>
<dbReference type="PharmGKB" id="PA37505"/>
<dbReference type="VEuPathDB" id="HostDB:ENSG00000131849"/>
<dbReference type="eggNOG" id="KOG1721">
    <property type="taxonomic scope" value="Eukaryota"/>
</dbReference>
<dbReference type="GeneTree" id="ENSGT00940000163387"/>
<dbReference type="HOGENOM" id="CLU_002678_44_5_1"/>
<dbReference type="InParanoid" id="P52740"/>
<dbReference type="OrthoDB" id="9823177at2759"/>
<dbReference type="PAN-GO" id="P52740">
    <property type="GO annotations" value="4 GO annotations based on evolutionary models"/>
</dbReference>
<dbReference type="PhylomeDB" id="P52740"/>
<dbReference type="TreeFam" id="TF339848"/>
<dbReference type="PathwayCommons" id="P52740"/>
<dbReference type="SignaLink" id="P52740"/>
<dbReference type="BioGRID-ORCS" id="7691">
    <property type="hits" value="11 hits in 1174 CRISPR screens"/>
</dbReference>
<dbReference type="ChiTaRS" id="ZNF132">
    <property type="organism name" value="human"/>
</dbReference>
<dbReference type="GenomeRNAi" id="7691"/>
<dbReference type="Pharos" id="P52740">
    <property type="development level" value="Tbio"/>
</dbReference>
<dbReference type="PRO" id="PR:P52740"/>
<dbReference type="Proteomes" id="UP000005640">
    <property type="component" value="Chromosome 19"/>
</dbReference>
<dbReference type="RNAct" id="P52740">
    <property type="molecule type" value="protein"/>
</dbReference>
<dbReference type="Bgee" id="ENSG00000131849">
    <property type="expression patterns" value="Expressed in ventricular zone and 100 other cell types or tissues"/>
</dbReference>
<dbReference type="ExpressionAtlas" id="P52740">
    <property type="expression patterns" value="baseline and differential"/>
</dbReference>
<dbReference type="GO" id="GO:0005634">
    <property type="term" value="C:nucleus"/>
    <property type="evidence" value="ECO:0000318"/>
    <property type="project" value="GO_Central"/>
</dbReference>
<dbReference type="GO" id="GO:0000981">
    <property type="term" value="F:DNA-binding transcription factor activity, RNA polymerase II-specific"/>
    <property type="evidence" value="ECO:0000318"/>
    <property type="project" value="GO_Central"/>
</dbReference>
<dbReference type="GO" id="GO:0000978">
    <property type="term" value="F:RNA polymerase II cis-regulatory region sequence-specific DNA binding"/>
    <property type="evidence" value="ECO:0000318"/>
    <property type="project" value="GO_Central"/>
</dbReference>
<dbReference type="GO" id="GO:0008270">
    <property type="term" value="F:zinc ion binding"/>
    <property type="evidence" value="ECO:0007669"/>
    <property type="project" value="UniProtKB-KW"/>
</dbReference>
<dbReference type="GO" id="GO:0006357">
    <property type="term" value="P:regulation of transcription by RNA polymerase II"/>
    <property type="evidence" value="ECO:0000318"/>
    <property type="project" value="GO_Central"/>
</dbReference>
<dbReference type="CDD" id="cd07765">
    <property type="entry name" value="KRAB_A-box"/>
    <property type="match status" value="1"/>
</dbReference>
<dbReference type="FunFam" id="3.30.160.60:FF:000062">
    <property type="entry name" value="RB-associated KRAB zinc finger protein-like"/>
    <property type="match status" value="1"/>
</dbReference>
<dbReference type="FunFam" id="3.30.160.60:FF:000295">
    <property type="entry name" value="zinc finger protein 19"/>
    <property type="match status" value="1"/>
</dbReference>
<dbReference type="FunFam" id="3.30.160.60:FF:000352">
    <property type="entry name" value="zinc finger protein 3 homolog"/>
    <property type="match status" value="2"/>
</dbReference>
<dbReference type="FunFam" id="3.30.160.60:FF:002343">
    <property type="entry name" value="Zinc finger protein 33A"/>
    <property type="match status" value="3"/>
</dbReference>
<dbReference type="FunFam" id="3.30.160.60:FF:000127">
    <property type="entry name" value="Zinc finger protein 354C"/>
    <property type="match status" value="2"/>
</dbReference>
<dbReference type="FunFam" id="3.30.160.60:FF:000443">
    <property type="entry name" value="Zinc finger protein 41"/>
    <property type="match status" value="1"/>
</dbReference>
<dbReference type="FunFam" id="3.30.160.60:FF:000519">
    <property type="entry name" value="Zinc finger protein 470"/>
    <property type="match status" value="1"/>
</dbReference>
<dbReference type="FunFam" id="3.30.160.60:FF:000281">
    <property type="entry name" value="Zinc finger protein 558 isoform X1"/>
    <property type="match status" value="1"/>
</dbReference>
<dbReference type="FunFam" id="3.30.160.60:FF:000149">
    <property type="entry name" value="Zinc finger protein 569"/>
    <property type="match status" value="1"/>
</dbReference>
<dbReference type="FunFam" id="3.30.160.60:FF:001396">
    <property type="entry name" value="Zinc finger protein 585A"/>
    <property type="match status" value="1"/>
</dbReference>
<dbReference type="FunFam" id="3.30.160.60:FF:000098">
    <property type="entry name" value="Zinc finger protein 614"/>
    <property type="match status" value="2"/>
</dbReference>
<dbReference type="FunFam" id="3.30.160.60:FF:000953">
    <property type="entry name" value="Zinc finger protein 691"/>
    <property type="match status" value="1"/>
</dbReference>
<dbReference type="Gene3D" id="6.10.140.140">
    <property type="match status" value="1"/>
</dbReference>
<dbReference type="Gene3D" id="3.30.160.60">
    <property type="entry name" value="Classic Zinc Finger"/>
    <property type="match status" value="18"/>
</dbReference>
<dbReference type="InterPro" id="IPR001909">
    <property type="entry name" value="KRAB"/>
</dbReference>
<dbReference type="InterPro" id="IPR036051">
    <property type="entry name" value="KRAB_dom_sf"/>
</dbReference>
<dbReference type="InterPro" id="IPR050527">
    <property type="entry name" value="Snail/Krueppel_Znf"/>
</dbReference>
<dbReference type="InterPro" id="IPR036236">
    <property type="entry name" value="Znf_C2H2_sf"/>
</dbReference>
<dbReference type="InterPro" id="IPR013087">
    <property type="entry name" value="Znf_C2H2_type"/>
</dbReference>
<dbReference type="PANTHER" id="PTHR24388:SF54">
    <property type="entry name" value="PROTEIN ESCARGOT"/>
    <property type="match status" value="1"/>
</dbReference>
<dbReference type="PANTHER" id="PTHR24388">
    <property type="entry name" value="ZINC FINGER PROTEIN"/>
    <property type="match status" value="1"/>
</dbReference>
<dbReference type="Pfam" id="PF01352">
    <property type="entry name" value="KRAB"/>
    <property type="match status" value="1"/>
</dbReference>
<dbReference type="Pfam" id="PF00096">
    <property type="entry name" value="zf-C2H2"/>
    <property type="match status" value="14"/>
</dbReference>
<dbReference type="SMART" id="SM00349">
    <property type="entry name" value="KRAB"/>
    <property type="match status" value="1"/>
</dbReference>
<dbReference type="SMART" id="SM00355">
    <property type="entry name" value="ZnF_C2H2"/>
    <property type="match status" value="17"/>
</dbReference>
<dbReference type="SUPFAM" id="SSF57667">
    <property type="entry name" value="beta-beta-alpha zinc fingers"/>
    <property type="match status" value="10"/>
</dbReference>
<dbReference type="SUPFAM" id="SSF109640">
    <property type="entry name" value="KRAB domain (Kruppel-associated box)"/>
    <property type="match status" value="1"/>
</dbReference>
<dbReference type="PROSITE" id="PS50805">
    <property type="entry name" value="KRAB"/>
    <property type="match status" value="1"/>
</dbReference>
<dbReference type="PROSITE" id="PS00028">
    <property type="entry name" value="ZINC_FINGER_C2H2_1"/>
    <property type="match status" value="17"/>
</dbReference>
<dbReference type="PROSITE" id="PS50157">
    <property type="entry name" value="ZINC_FINGER_C2H2_2"/>
    <property type="match status" value="18"/>
</dbReference>
<comment type="function">
    <text>May be involved in transcriptional regulation.</text>
</comment>
<comment type="subcellular location">
    <subcellularLocation>
        <location evidence="4">Nucleus</location>
    </subcellularLocation>
</comment>
<comment type="alternative products">
    <event type="alternative splicing"/>
    <isoform>
        <id>P52740-1</id>
        <name>1</name>
        <sequence type="displayed"/>
    </isoform>
    <isoform>
        <id>P52740-2</id>
        <name>2</name>
        <sequence type="described" ref="VSP_035665"/>
    </isoform>
</comment>
<comment type="similarity">
    <text evidence="4">Belongs to the krueppel C2H2-type zinc-finger protein family.</text>
</comment>
<accession>P52740</accession>
<accession>Q32MI9</accession>
<proteinExistence type="evidence at protein level"/>
<feature type="chain" id="PRO_0000047416" description="Zinc finger protein 132">
    <location>
        <begin position="1"/>
        <end position="706"/>
    </location>
</feature>
<feature type="domain" description="KRAB" evidence="2">
    <location>
        <begin position="38"/>
        <end position="121"/>
    </location>
</feature>
<feature type="zinc finger region" description="C2H2-type 1; degenerate" evidence="1">
    <location>
        <begin position="114"/>
        <end position="136"/>
    </location>
</feature>
<feature type="zinc finger region" description="C2H2-type 2" evidence="1">
    <location>
        <begin position="142"/>
        <end position="164"/>
    </location>
</feature>
<feature type="zinc finger region" description="C2H2-type 3" evidence="1">
    <location>
        <begin position="236"/>
        <end position="258"/>
    </location>
</feature>
<feature type="zinc finger region" description="C2H2-type 4" evidence="1">
    <location>
        <begin position="291"/>
        <end position="313"/>
    </location>
</feature>
<feature type="zinc finger region" description="C2H2-type 5" evidence="1">
    <location>
        <begin position="319"/>
        <end position="341"/>
    </location>
</feature>
<feature type="zinc finger region" description="C2H2-type 6" evidence="1">
    <location>
        <begin position="347"/>
        <end position="369"/>
    </location>
</feature>
<feature type="zinc finger region" description="C2H2-type 7" evidence="1">
    <location>
        <begin position="375"/>
        <end position="397"/>
    </location>
</feature>
<feature type="zinc finger region" description="C2H2-type 8" evidence="1">
    <location>
        <begin position="403"/>
        <end position="425"/>
    </location>
</feature>
<feature type="zinc finger region" description="C2H2-type 9" evidence="1">
    <location>
        <begin position="431"/>
        <end position="453"/>
    </location>
</feature>
<feature type="zinc finger region" description="C2H2-type 10" evidence="1">
    <location>
        <begin position="459"/>
        <end position="481"/>
    </location>
</feature>
<feature type="zinc finger region" description="C2H2-type 11" evidence="1">
    <location>
        <begin position="487"/>
        <end position="509"/>
    </location>
</feature>
<feature type="zinc finger region" description="C2H2-type 12" evidence="1">
    <location>
        <begin position="515"/>
        <end position="537"/>
    </location>
</feature>
<feature type="zinc finger region" description="C2H2-type 13" evidence="1">
    <location>
        <begin position="543"/>
        <end position="565"/>
    </location>
</feature>
<feature type="zinc finger region" description="C2H2-type 14" evidence="1">
    <location>
        <begin position="571"/>
        <end position="593"/>
    </location>
</feature>
<feature type="zinc finger region" description="C2H2-type 15" evidence="1">
    <location>
        <begin position="599"/>
        <end position="621"/>
    </location>
</feature>
<feature type="zinc finger region" description="C2H2-type 16" evidence="1">
    <location>
        <begin position="627"/>
        <end position="649"/>
    </location>
</feature>
<feature type="zinc finger region" description="C2H2-type 17" evidence="1">
    <location>
        <begin position="655"/>
        <end position="677"/>
    </location>
</feature>
<feature type="zinc finger region" description="C2H2-type 18" evidence="1">
    <location>
        <begin position="683"/>
        <end position="705"/>
    </location>
</feature>
<feature type="splice variant" id="VSP_035665" description="In isoform 2." evidence="3">
    <location>
        <begin position="1"/>
        <end position="117"/>
    </location>
</feature>
<feature type="sequence variant" id="VAR_047229" description="In dbSNP:rs1122955.">
    <original>G</original>
    <variation>D</variation>
    <location>
        <position position="203"/>
    </location>
</feature>
<feature type="sequence variant" id="VAR_012024" description="In dbSNP:rs1465789.">
    <original>P</original>
    <variation>L</variation>
    <location>
        <position position="252"/>
    </location>
</feature>
<keyword id="KW-0025">Alternative splicing</keyword>
<keyword id="KW-0238">DNA-binding</keyword>
<keyword id="KW-0479">Metal-binding</keyword>
<keyword id="KW-0539">Nucleus</keyword>
<keyword id="KW-1267">Proteomics identification</keyword>
<keyword id="KW-1185">Reference proteome</keyword>
<keyword id="KW-0677">Repeat</keyword>
<keyword id="KW-0804">Transcription</keyword>
<keyword id="KW-0805">Transcription regulation</keyword>
<keyword id="KW-0862">Zinc</keyword>
<keyword id="KW-0863">Zinc-finger</keyword>
<evidence type="ECO:0000255" key="1">
    <source>
        <dbReference type="PROSITE-ProRule" id="PRU00042"/>
    </source>
</evidence>
<evidence type="ECO:0000255" key="2">
    <source>
        <dbReference type="PROSITE-ProRule" id="PRU00119"/>
    </source>
</evidence>
<evidence type="ECO:0000303" key="3">
    <source>
    </source>
</evidence>
<evidence type="ECO:0000305" key="4"/>